<sequence length="132" mass="14205">MSFEYRHYKREAKICTCRGGWAHVLLCIGVSQGACAEHLPHRPAVEKDVPGAGEVLFMCSWRIFPVASASPSSSISGLAGHSVFLVPGLAAHPGSHSDQPPGVPSRRKSRLERWSPSVSRSTSPPTEAPFCL</sequence>
<proteinExistence type="uncertain"/>
<dbReference type="EMBL" id="AC011840">
    <property type="status" value="NOT_ANNOTATED_CDS"/>
    <property type="molecule type" value="Genomic_DNA"/>
</dbReference>
<dbReference type="EMBL" id="AA417252">
    <property type="status" value="NOT_ANNOTATED_CDS"/>
    <property type="molecule type" value="mRNA"/>
</dbReference>
<dbReference type="BioMuta" id="-"/>
<dbReference type="neXtProt" id="NX_A8MUN3"/>
<dbReference type="InParanoid" id="A8MUN3"/>
<dbReference type="PAN-GO" id="A8MUN3">
    <property type="GO annotations" value="0 GO annotations based on evolutionary models"/>
</dbReference>
<dbReference type="PhylomeDB" id="A8MUN3"/>
<dbReference type="Pharos" id="A8MUN3">
    <property type="development level" value="Tdark"/>
</dbReference>
<dbReference type="Proteomes" id="UP000005640">
    <property type="component" value="Unplaced"/>
</dbReference>
<dbReference type="RNAct" id="A8MUN3">
    <property type="molecule type" value="protein"/>
</dbReference>
<dbReference type="GO" id="GO:0005576">
    <property type="term" value="C:extracellular region"/>
    <property type="evidence" value="ECO:0007669"/>
    <property type="project" value="UniProtKB-SubCell"/>
</dbReference>
<keyword id="KW-1185">Reference proteome</keyword>
<keyword id="KW-0964">Secreted</keyword>
<keyword id="KW-0732">Signal</keyword>
<name>YQ048_HUMAN</name>
<protein>
    <recommendedName>
        <fullName>Putative uncharacterized protein ENSP00000381830</fullName>
    </recommendedName>
</protein>
<accession>A8MUN3</accession>
<evidence type="ECO:0000255" key="1"/>
<evidence type="ECO:0000256" key="2">
    <source>
        <dbReference type="SAM" id="MobiDB-lite"/>
    </source>
</evidence>
<evidence type="ECO:0000305" key="3"/>
<organism>
    <name type="scientific">Homo sapiens</name>
    <name type="common">Human</name>
    <dbReference type="NCBI Taxonomy" id="9606"/>
    <lineage>
        <taxon>Eukaryota</taxon>
        <taxon>Metazoa</taxon>
        <taxon>Chordata</taxon>
        <taxon>Craniata</taxon>
        <taxon>Vertebrata</taxon>
        <taxon>Euteleostomi</taxon>
        <taxon>Mammalia</taxon>
        <taxon>Eutheria</taxon>
        <taxon>Euarchontoglires</taxon>
        <taxon>Primates</taxon>
        <taxon>Haplorrhini</taxon>
        <taxon>Catarrhini</taxon>
        <taxon>Hominidae</taxon>
        <taxon>Homo</taxon>
    </lineage>
</organism>
<comment type="subcellular location">
    <subcellularLocation>
        <location evidence="3">Secreted</location>
    </subcellularLocation>
</comment>
<comment type="caution">
    <text evidence="3">Product of a dubious gene prediction.</text>
</comment>
<reference key="1">
    <citation type="journal article" date="2006" name="Nature">
        <title>DNA sequence of human chromosome 17 and analysis of rearrangement in the human lineage.</title>
        <authorList>
            <person name="Zody M.C."/>
            <person name="Garber M."/>
            <person name="Adams D.J."/>
            <person name="Sharpe T."/>
            <person name="Harrow J."/>
            <person name="Lupski J.R."/>
            <person name="Nicholson C."/>
            <person name="Searle S.M."/>
            <person name="Wilming L."/>
            <person name="Young S.K."/>
            <person name="Abouelleil A."/>
            <person name="Allen N.R."/>
            <person name="Bi W."/>
            <person name="Bloom T."/>
            <person name="Borowsky M.L."/>
            <person name="Bugalter B.E."/>
            <person name="Butler J."/>
            <person name="Chang J.L."/>
            <person name="Chen C.-K."/>
            <person name="Cook A."/>
            <person name="Corum B."/>
            <person name="Cuomo C.A."/>
            <person name="de Jong P.J."/>
            <person name="DeCaprio D."/>
            <person name="Dewar K."/>
            <person name="FitzGerald M."/>
            <person name="Gilbert J."/>
            <person name="Gibson R."/>
            <person name="Gnerre S."/>
            <person name="Goldstein S."/>
            <person name="Grafham D.V."/>
            <person name="Grocock R."/>
            <person name="Hafez N."/>
            <person name="Hagopian D.S."/>
            <person name="Hart E."/>
            <person name="Norman C.H."/>
            <person name="Humphray S."/>
            <person name="Jaffe D.B."/>
            <person name="Jones M."/>
            <person name="Kamal M."/>
            <person name="Khodiyar V.K."/>
            <person name="LaButti K."/>
            <person name="Laird G."/>
            <person name="Lehoczky J."/>
            <person name="Liu X."/>
            <person name="Lokyitsang T."/>
            <person name="Loveland J."/>
            <person name="Lui A."/>
            <person name="Macdonald P."/>
            <person name="Major J.E."/>
            <person name="Matthews L."/>
            <person name="Mauceli E."/>
            <person name="McCarroll S.A."/>
            <person name="Mihalev A.H."/>
            <person name="Mudge J."/>
            <person name="Nguyen C."/>
            <person name="Nicol R."/>
            <person name="O'Leary S.B."/>
            <person name="Osoegawa K."/>
            <person name="Schwartz D.C."/>
            <person name="Shaw-Smith C."/>
            <person name="Stankiewicz P."/>
            <person name="Steward C."/>
            <person name="Swarbreck D."/>
            <person name="Venkataraman V."/>
            <person name="Whittaker C.A."/>
            <person name="Yang X."/>
            <person name="Zimmer A.R."/>
            <person name="Bradley A."/>
            <person name="Hubbard T."/>
            <person name="Birren B.W."/>
            <person name="Rogers J."/>
            <person name="Lander E.S."/>
            <person name="Nusbaum C."/>
        </authorList>
    </citation>
    <scope>NUCLEOTIDE SEQUENCE [LARGE SCALE GENOMIC DNA]</scope>
</reference>
<reference key="2">
    <citation type="submission" date="2000-03" db="EMBL/GenBank/DDBJ databases">
        <title>WashU-NCI human EST project.</title>
        <authorList>
            <person name="Hillier L."/>
            <person name="Allen M."/>
            <person name="Bowles L."/>
            <person name="Dubuque T."/>
            <person name="Geisel G."/>
            <person name="Jost S."/>
            <person name="Krizman D."/>
            <person name="Kucaba T."/>
            <person name="Lacy M."/>
            <person name="Le N."/>
            <person name="Lennon G."/>
            <person name="Marra M."/>
            <person name="Martin J."/>
            <person name="Moore B."/>
            <person name="Schellenberg K."/>
            <person name="Steptoe M."/>
            <person name="Tan F."/>
            <person name="Theising B."/>
            <person name="White Y."/>
            <person name="Wylie T."/>
            <person name="Waterston R."/>
            <person name="Wilson R."/>
        </authorList>
    </citation>
    <scope>NUCLEOTIDE SEQUENCE [LARGE SCALE MRNA] OF 49-132</scope>
</reference>
<feature type="signal peptide" evidence="1">
    <location>
        <begin position="1"/>
        <end position="35"/>
    </location>
</feature>
<feature type="chain" id="PRO_0000348255" description="Putative uncharacterized protein ENSP00000381830">
    <location>
        <begin position="36"/>
        <end position="132"/>
    </location>
</feature>
<feature type="region of interest" description="Disordered" evidence="2">
    <location>
        <begin position="91"/>
        <end position="132"/>
    </location>
</feature>
<feature type="compositionally biased region" description="Low complexity" evidence="2">
    <location>
        <begin position="115"/>
        <end position="125"/>
    </location>
</feature>